<name>Y533_PYRHO</name>
<organism>
    <name type="scientific">Pyrococcus horikoshii (strain ATCC 700860 / DSM 12428 / JCM 9974 / NBRC 100139 / OT-3)</name>
    <dbReference type="NCBI Taxonomy" id="70601"/>
    <lineage>
        <taxon>Archaea</taxon>
        <taxon>Methanobacteriati</taxon>
        <taxon>Methanobacteriota</taxon>
        <taxon>Thermococci</taxon>
        <taxon>Thermococcales</taxon>
        <taxon>Thermococcaceae</taxon>
        <taxon>Pyrococcus</taxon>
    </lineage>
</organism>
<evidence type="ECO:0000256" key="1">
    <source>
        <dbReference type="SAM" id="MobiDB-lite"/>
    </source>
</evidence>
<evidence type="ECO:0000305" key="2"/>
<sequence length="116" mass="13230">MRKVIHIGLPKLSEEELIEIGDIAQRVIIDYIFEHLAKSEVRDMEVTARINQGETLDLELEVYVEVPIFVRVDVESLIDEAIDKAYEVVERHLRKLAKGKGNEGREEAEEASGKSK</sequence>
<proteinExistence type="inferred from homology"/>
<gene>
    <name type="ordered locus">PH0533</name>
</gene>
<feature type="chain" id="PRO_0000293129" description="Uncharacterized protein PH0533">
    <location>
        <begin position="1"/>
        <end position="116"/>
    </location>
</feature>
<feature type="region of interest" description="Disordered" evidence="1">
    <location>
        <begin position="97"/>
        <end position="116"/>
    </location>
</feature>
<feature type="compositionally biased region" description="Basic and acidic residues" evidence="1">
    <location>
        <begin position="100"/>
        <end position="116"/>
    </location>
</feature>
<dbReference type="EMBL" id="BA000001">
    <property type="protein sequence ID" value="BAA29622.1"/>
    <property type="status" value="ALT_INIT"/>
    <property type="molecule type" value="Genomic_DNA"/>
</dbReference>
<dbReference type="PIR" id="A71167">
    <property type="entry name" value="A71167"/>
</dbReference>
<dbReference type="RefSeq" id="WP_048053151.1">
    <property type="nucleotide sequence ID" value="NC_000961.1"/>
</dbReference>
<dbReference type="SMR" id="O73978"/>
<dbReference type="STRING" id="70601.gene:9377468"/>
<dbReference type="EnsemblBacteria" id="BAA29622">
    <property type="protein sequence ID" value="BAA29622"/>
    <property type="gene ID" value="BAA29622"/>
</dbReference>
<dbReference type="GeneID" id="1444422"/>
<dbReference type="KEGG" id="pho:PH0533"/>
<dbReference type="eggNOG" id="arCOG05854">
    <property type="taxonomic scope" value="Archaea"/>
</dbReference>
<dbReference type="OrthoDB" id="85298at2157"/>
<dbReference type="Proteomes" id="UP000000752">
    <property type="component" value="Chromosome"/>
</dbReference>
<dbReference type="Gene3D" id="3.30.300.100">
    <property type="entry name" value="MTH677-like"/>
    <property type="match status" value="1"/>
</dbReference>
<dbReference type="InterPro" id="IPR024502">
    <property type="entry name" value="DUF3194"/>
</dbReference>
<dbReference type="InterPro" id="IPR035954">
    <property type="entry name" value="MTH677-like_sf"/>
</dbReference>
<dbReference type="Pfam" id="PF11419">
    <property type="entry name" value="DUF3194"/>
    <property type="match status" value="1"/>
</dbReference>
<dbReference type="SUPFAM" id="SSF110783">
    <property type="entry name" value="Hypothetical protein MTH677"/>
    <property type="match status" value="1"/>
</dbReference>
<accession>O73978</accession>
<protein>
    <recommendedName>
        <fullName>Uncharacterized protein PH0533</fullName>
    </recommendedName>
</protein>
<comment type="similarity">
    <text evidence="2">Belongs to the UPF0440 family.</text>
</comment>
<comment type="sequence caution" evidence="2">
    <conflict type="erroneous initiation">
        <sequence resource="EMBL-CDS" id="BAA29622"/>
    </conflict>
</comment>
<reference key="1">
    <citation type="journal article" date="1998" name="DNA Res.">
        <title>Complete sequence and gene organization of the genome of a hyper-thermophilic archaebacterium, Pyrococcus horikoshii OT3.</title>
        <authorList>
            <person name="Kawarabayasi Y."/>
            <person name="Sawada M."/>
            <person name="Horikawa H."/>
            <person name="Haikawa Y."/>
            <person name="Hino Y."/>
            <person name="Yamamoto S."/>
            <person name="Sekine M."/>
            <person name="Baba S."/>
            <person name="Kosugi H."/>
            <person name="Hosoyama A."/>
            <person name="Nagai Y."/>
            <person name="Sakai M."/>
            <person name="Ogura K."/>
            <person name="Otsuka R."/>
            <person name="Nakazawa H."/>
            <person name="Takamiya M."/>
            <person name="Ohfuku Y."/>
            <person name="Funahashi T."/>
            <person name="Tanaka T."/>
            <person name="Kudoh Y."/>
            <person name="Yamazaki J."/>
            <person name="Kushida N."/>
            <person name="Oguchi A."/>
            <person name="Aoki K."/>
            <person name="Yoshizawa T."/>
            <person name="Nakamura Y."/>
            <person name="Robb F.T."/>
            <person name="Horikoshi K."/>
            <person name="Masuchi Y."/>
            <person name="Shizuya H."/>
            <person name="Kikuchi H."/>
        </authorList>
    </citation>
    <scope>NUCLEOTIDE SEQUENCE [LARGE SCALE GENOMIC DNA]</scope>
    <source>
        <strain>ATCC 700860 / DSM 12428 / JCM 9974 / NBRC 100139 / OT-3</strain>
    </source>
</reference>